<reference key="1">
    <citation type="journal article" date="2006" name="Genome Biol.">
        <title>The genome of Rhizobium leguminosarum has recognizable core and accessory components.</title>
        <authorList>
            <person name="Young J.P.W."/>
            <person name="Crossman L.C."/>
            <person name="Johnston A.W.B."/>
            <person name="Thomson N.R."/>
            <person name="Ghazoui Z.F."/>
            <person name="Hull K.H."/>
            <person name="Wexler M."/>
            <person name="Curson A.R.J."/>
            <person name="Todd J.D."/>
            <person name="Poole P.S."/>
            <person name="Mauchline T.H."/>
            <person name="East A.K."/>
            <person name="Quail M.A."/>
            <person name="Churcher C."/>
            <person name="Arrowsmith C."/>
            <person name="Cherevach I."/>
            <person name="Chillingworth T."/>
            <person name="Clarke K."/>
            <person name="Cronin A."/>
            <person name="Davis P."/>
            <person name="Fraser A."/>
            <person name="Hance Z."/>
            <person name="Hauser H."/>
            <person name="Jagels K."/>
            <person name="Moule S."/>
            <person name="Mungall K."/>
            <person name="Norbertczak H."/>
            <person name="Rabbinowitsch E."/>
            <person name="Sanders M."/>
            <person name="Simmonds M."/>
            <person name="Whitehead S."/>
            <person name="Parkhill J."/>
        </authorList>
    </citation>
    <scope>NUCLEOTIDE SEQUENCE [LARGE SCALE GENOMIC DNA]</scope>
    <source>
        <strain>DSM 114642 / LMG 32736 / 3841</strain>
    </source>
</reference>
<keyword id="KW-0378">Hydrolase</keyword>
<keyword id="KW-0479">Metal-binding</keyword>
<keyword id="KW-0482">Metalloprotease</keyword>
<keyword id="KW-0645">Protease</keyword>
<keyword id="KW-0862">Zinc</keyword>
<dbReference type="EMBL" id="AM236080">
    <property type="protein sequence ID" value="CAK07560.1"/>
    <property type="molecule type" value="Genomic_DNA"/>
</dbReference>
<dbReference type="SMR" id="Q1MHK3"/>
<dbReference type="EnsemblBacteria" id="CAK07560">
    <property type="protein sequence ID" value="CAK07560"/>
    <property type="gene ID" value="RL2068"/>
</dbReference>
<dbReference type="KEGG" id="rle:RL2068"/>
<dbReference type="eggNOG" id="COG2003">
    <property type="taxonomic scope" value="Bacteria"/>
</dbReference>
<dbReference type="HOGENOM" id="CLU_073529_0_0_5"/>
<dbReference type="Proteomes" id="UP000006575">
    <property type="component" value="Chromosome"/>
</dbReference>
<dbReference type="GO" id="GO:0046872">
    <property type="term" value="F:metal ion binding"/>
    <property type="evidence" value="ECO:0007669"/>
    <property type="project" value="UniProtKB-KW"/>
</dbReference>
<dbReference type="GO" id="GO:0008237">
    <property type="term" value="F:metallopeptidase activity"/>
    <property type="evidence" value="ECO:0007669"/>
    <property type="project" value="UniProtKB-KW"/>
</dbReference>
<dbReference type="GO" id="GO:0006508">
    <property type="term" value="P:proteolysis"/>
    <property type="evidence" value="ECO:0007669"/>
    <property type="project" value="UniProtKB-KW"/>
</dbReference>
<dbReference type="CDD" id="cd08071">
    <property type="entry name" value="MPN_DUF2466"/>
    <property type="match status" value="1"/>
</dbReference>
<dbReference type="Gene3D" id="1.10.150.20">
    <property type="entry name" value="5' to 3' exonuclease, C-terminal subdomain"/>
    <property type="match status" value="1"/>
</dbReference>
<dbReference type="Gene3D" id="3.40.140.10">
    <property type="entry name" value="Cytidine Deaminase, domain 2"/>
    <property type="match status" value="1"/>
</dbReference>
<dbReference type="InterPro" id="IPR037518">
    <property type="entry name" value="MPN"/>
</dbReference>
<dbReference type="InterPro" id="IPR025657">
    <property type="entry name" value="RadC_JAB"/>
</dbReference>
<dbReference type="InterPro" id="IPR010994">
    <property type="entry name" value="RuvA_2-like"/>
</dbReference>
<dbReference type="InterPro" id="IPR001405">
    <property type="entry name" value="UPF0758"/>
</dbReference>
<dbReference type="InterPro" id="IPR020891">
    <property type="entry name" value="UPF0758_CS"/>
</dbReference>
<dbReference type="InterPro" id="IPR046778">
    <property type="entry name" value="UPF0758_N"/>
</dbReference>
<dbReference type="NCBIfam" id="NF000642">
    <property type="entry name" value="PRK00024.1"/>
    <property type="match status" value="1"/>
</dbReference>
<dbReference type="NCBIfam" id="TIGR00608">
    <property type="entry name" value="radc"/>
    <property type="match status" value="1"/>
</dbReference>
<dbReference type="PANTHER" id="PTHR30471">
    <property type="entry name" value="DNA REPAIR PROTEIN RADC"/>
    <property type="match status" value="1"/>
</dbReference>
<dbReference type="PANTHER" id="PTHR30471:SF3">
    <property type="entry name" value="UPF0758 PROTEIN YEES-RELATED"/>
    <property type="match status" value="1"/>
</dbReference>
<dbReference type="Pfam" id="PF04002">
    <property type="entry name" value="RadC"/>
    <property type="match status" value="1"/>
</dbReference>
<dbReference type="Pfam" id="PF20582">
    <property type="entry name" value="UPF0758_N"/>
    <property type="match status" value="1"/>
</dbReference>
<dbReference type="SUPFAM" id="SSF102712">
    <property type="entry name" value="JAB1/MPN domain"/>
    <property type="match status" value="1"/>
</dbReference>
<dbReference type="SUPFAM" id="SSF47781">
    <property type="entry name" value="RuvA domain 2-like"/>
    <property type="match status" value="1"/>
</dbReference>
<dbReference type="PROSITE" id="PS50249">
    <property type="entry name" value="MPN"/>
    <property type="match status" value="1"/>
</dbReference>
<dbReference type="PROSITE" id="PS01302">
    <property type="entry name" value="UPF0758"/>
    <property type="match status" value="1"/>
</dbReference>
<evidence type="ECO:0000255" key="1">
    <source>
        <dbReference type="PROSITE-ProRule" id="PRU01182"/>
    </source>
</evidence>
<evidence type="ECO:0000256" key="2">
    <source>
        <dbReference type="SAM" id="MobiDB-lite"/>
    </source>
</evidence>
<evidence type="ECO:0000305" key="3"/>
<protein>
    <recommendedName>
        <fullName>UPF0758 protein RL2068</fullName>
    </recommendedName>
</protein>
<proteinExistence type="inferred from homology"/>
<accession>Q1MHK3</accession>
<name>Y2068_RHIJ3</name>
<comment type="similarity">
    <text evidence="3">Belongs to the UPF0758 family.</text>
</comment>
<organism>
    <name type="scientific">Rhizobium johnstonii (strain DSM 114642 / LMG 32736 / 3841)</name>
    <name type="common">Rhizobium leguminosarum bv. viciae</name>
    <dbReference type="NCBI Taxonomy" id="216596"/>
    <lineage>
        <taxon>Bacteria</taxon>
        <taxon>Pseudomonadati</taxon>
        <taxon>Pseudomonadota</taxon>
        <taxon>Alphaproteobacteria</taxon>
        <taxon>Hyphomicrobiales</taxon>
        <taxon>Rhizobiaceae</taxon>
        <taxon>Rhizobium/Agrobacterium group</taxon>
        <taxon>Rhizobium</taxon>
        <taxon>Rhizobium johnstonii</taxon>
    </lineage>
</organism>
<sequence length="275" mass="30279">MAKGPVSTSSDDELPFETQEPIAADERSFFGGQPQKPSAPNARAALPASLAGQEHYHGHRERLRDRFREQGDAALADYEILELLLFRLIPRRDTKPIAKALIERFGSLAGVFGAPQALLMEVKGVGEAVALDLKLISTVAHRTLKSELRTKQVLSSWSSVIQYCHAAMAHETREQFRILFLDKRNVLIADEVQGRGTVDHTPVYPREVVKRALELSATAMVLVHNHPSGDPTPSRADIDMTKVIIDAAKALDITVHDHIIIGKDGHVSLKGLKLI</sequence>
<gene>
    <name type="ordered locus">RL2068</name>
</gene>
<feature type="chain" id="PRO_1000116364" description="UPF0758 protein RL2068">
    <location>
        <begin position="1"/>
        <end position="275"/>
    </location>
</feature>
<feature type="domain" description="MPN" evidence="1">
    <location>
        <begin position="153"/>
        <end position="275"/>
    </location>
</feature>
<feature type="region of interest" description="Disordered" evidence="2">
    <location>
        <begin position="1"/>
        <end position="45"/>
    </location>
</feature>
<feature type="short sequence motif" description="JAMM motif" evidence="1">
    <location>
        <begin position="224"/>
        <end position="237"/>
    </location>
</feature>
<feature type="binding site" evidence="1">
    <location>
        <position position="224"/>
    </location>
    <ligand>
        <name>Zn(2+)</name>
        <dbReference type="ChEBI" id="CHEBI:29105"/>
        <note>catalytic</note>
    </ligand>
</feature>
<feature type="binding site" evidence="1">
    <location>
        <position position="226"/>
    </location>
    <ligand>
        <name>Zn(2+)</name>
        <dbReference type="ChEBI" id="CHEBI:29105"/>
        <note>catalytic</note>
    </ligand>
</feature>
<feature type="binding site" evidence="1">
    <location>
        <position position="237"/>
    </location>
    <ligand>
        <name>Zn(2+)</name>
        <dbReference type="ChEBI" id="CHEBI:29105"/>
        <note>catalytic</note>
    </ligand>
</feature>